<feature type="chain" id="PRO_1000191308" description="Probable malate:quinone oxidoreductase">
    <location>
        <begin position="1"/>
        <end position="500"/>
    </location>
</feature>
<evidence type="ECO:0000255" key="1">
    <source>
        <dbReference type="HAMAP-Rule" id="MF_00212"/>
    </source>
</evidence>
<reference key="1">
    <citation type="submission" date="2008-10" db="EMBL/GenBank/DDBJ databases">
        <title>Genome sequence of Bacillus cereus AH187.</title>
        <authorList>
            <person name="Dodson R.J."/>
            <person name="Durkin A.S."/>
            <person name="Rosovitz M.J."/>
            <person name="Rasko D.A."/>
            <person name="Kolsto A.B."/>
            <person name="Okstad O.A."/>
            <person name="Ravel J."/>
            <person name="Sutton G."/>
        </authorList>
    </citation>
    <scope>NUCLEOTIDE SEQUENCE [LARGE SCALE GENOMIC DNA]</scope>
    <source>
        <strain>AH187</strain>
    </source>
</reference>
<dbReference type="EC" id="1.1.5.4" evidence="1"/>
<dbReference type="EMBL" id="CP001177">
    <property type="protein sequence ID" value="ACJ80261.1"/>
    <property type="molecule type" value="Genomic_DNA"/>
</dbReference>
<dbReference type="SMR" id="B7HVJ1"/>
<dbReference type="KEGG" id="bcr:BCAH187_A3012"/>
<dbReference type="HOGENOM" id="CLU_028151_0_0_9"/>
<dbReference type="UniPathway" id="UPA00223">
    <property type="reaction ID" value="UER01008"/>
</dbReference>
<dbReference type="Proteomes" id="UP000002214">
    <property type="component" value="Chromosome"/>
</dbReference>
<dbReference type="GO" id="GO:0047545">
    <property type="term" value="F:2-hydroxyglutarate dehydrogenase activity"/>
    <property type="evidence" value="ECO:0007669"/>
    <property type="project" value="TreeGrafter"/>
</dbReference>
<dbReference type="GO" id="GO:0008924">
    <property type="term" value="F:L-malate dehydrogenase (quinone) activity"/>
    <property type="evidence" value="ECO:0007669"/>
    <property type="project" value="UniProtKB-UniRule"/>
</dbReference>
<dbReference type="GO" id="GO:0006099">
    <property type="term" value="P:tricarboxylic acid cycle"/>
    <property type="evidence" value="ECO:0007669"/>
    <property type="project" value="UniProtKB-UniRule"/>
</dbReference>
<dbReference type="HAMAP" id="MF_00212">
    <property type="entry name" value="MQO"/>
    <property type="match status" value="1"/>
</dbReference>
<dbReference type="InterPro" id="IPR036188">
    <property type="entry name" value="FAD/NAD-bd_sf"/>
</dbReference>
<dbReference type="InterPro" id="IPR006231">
    <property type="entry name" value="MQO"/>
</dbReference>
<dbReference type="NCBIfam" id="TIGR01320">
    <property type="entry name" value="mal_quin_oxido"/>
    <property type="match status" value="1"/>
</dbReference>
<dbReference type="NCBIfam" id="NF003603">
    <property type="entry name" value="PRK05257.1-1"/>
    <property type="match status" value="1"/>
</dbReference>
<dbReference type="NCBIfam" id="NF003604">
    <property type="entry name" value="PRK05257.1-3"/>
    <property type="match status" value="1"/>
</dbReference>
<dbReference type="NCBIfam" id="NF003605">
    <property type="entry name" value="PRK05257.1-4"/>
    <property type="match status" value="1"/>
</dbReference>
<dbReference type="NCBIfam" id="NF003606">
    <property type="entry name" value="PRK05257.2-1"/>
    <property type="match status" value="1"/>
</dbReference>
<dbReference type="NCBIfam" id="NF003608">
    <property type="entry name" value="PRK05257.2-4"/>
    <property type="match status" value="1"/>
</dbReference>
<dbReference type="NCBIfam" id="NF003610">
    <property type="entry name" value="PRK05257.3-1"/>
    <property type="match status" value="1"/>
</dbReference>
<dbReference type="NCBIfam" id="NF003611">
    <property type="entry name" value="PRK05257.3-2"/>
    <property type="match status" value="1"/>
</dbReference>
<dbReference type="NCBIfam" id="NF009875">
    <property type="entry name" value="PRK13339.1"/>
    <property type="match status" value="1"/>
</dbReference>
<dbReference type="PANTHER" id="PTHR43104">
    <property type="entry name" value="L-2-HYDROXYGLUTARATE DEHYDROGENASE, MITOCHONDRIAL"/>
    <property type="match status" value="1"/>
</dbReference>
<dbReference type="PANTHER" id="PTHR43104:SF2">
    <property type="entry name" value="L-2-HYDROXYGLUTARATE DEHYDROGENASE, MITOCHONDRIAL"/>
    <property type="match status" value="1"/>
</dbReference>
<dbReference type="Pfam" id="PF06039">
    <property type="entry name" value="Mqo"/>
    <property type="match status" value="1"/>
</dbReference>
<dbReference type="SUPFAM" id="SSF51905">
    <property type="entry name" value="FAD/NAD(P)-binding domain"/>
    <property type="match status" value="1"/>
</dbReference>
<keyword id="KW-0274">FAD</keyword>
<keyword id="KW-0285">Flavoprotein</keyword>
<keyword id="KW-0560">Oxidoreductase</keyword>
<keyword id="KW-0816">Tricarboxylic acid cycle</keyword>
<sequence>MSNMQQKTDVILIGAGIMSATLGSLLKELAPEWEIKVFEKLASAGEESSNEWNNAGTGHSALCELNYTSEKSDGSIDISKAVKVNEQFQLSRQFWAYLVKSKLIRNPQDFIMPLPHMSLVQGEKNVQFLKNRFEALSKNPLFQGMEFSDSPETLKKWLPLIMEGRTSNEPMAATKIDSGTDVNFGALTRMLFDYLKTKNVELNYKHSVENIKRTKNGLWEVKVHDMNSGKIEHHTAKFVFIGGGGGSLPLLQKTGIPESKHIGGFPVSGLFMVCKNQKVVEQHHAKVYGKAKVGAPPMSVPHLDTRYIDNKKALLFGPFAGFSPKFLKTGSNLDLIGSVKPNNVLTMLAAGVKEMGLTKYLIQQVMLSHEKRMEELREFIPNAKSEDWDIVVAGQRVQVIKDTDAGGKGTLQFGTEVVSAADGSIAALLGASPGASTAVHVMLEVLEKCFPSRMVEWEGKIKEMIPSYGISLTENPRLFQDLHTSTGRTLGLNEKETVHN</sequence>
<protein>
    <recommendedName>
        <fullName evidence="1">Probable malate:quinone oxidoreductase</fullName>
        <ecNumber evidence="1">1.1.5.4</ecNumber>
    </recommendedName>
    <alternativeName>
        <fullName evidence="1">MQO</fullName>
    </alternativeName>
    <alternativeName>
        <fullName evidence="1">Malate dehydrogenase [quinone]</fullName>
    </alternativeName>
</protein>
<name>MQO_BACC7</name>
<comment type="catalytic activity">
    <reaction evidence="1">
        <text>(S)-malate + a quinone = a quinol + oxaloacetate</text>
        <dbReference type="Rhea" id="RHEA:46012"/>
        <dbReference type="ChEBI" id="CHEBI:15589"/>
        <dbReference type="ChEBI" id="CHEBI:16452"/>
        <dbReference type="ChEBI" id="CHEBI:24646"/>
        <dbReference type="ChEBI" id="CHEBI:132124"/>
        <dbReference type="EC" id="1.1.5.4"/>
    </reaction>
</comment>
<comment type="cofactor">
    <cofactor evidence="1">
        <name>FAD</name>
        <dbReference type="ChEBI" id="CHEBI:57692"/>
    </cofactor>
</comment>
<comment type="pathway">
    <text evidence="1">Carbohydrate metabolism; tricarboxylic acid cycle; oxaloacetate from (S)-malate (quinone route): step 1/1.</text>
</comment>
<comment type="similarity">
    <text evidence="1">Belongs to the MQO family.</text>
</comment>
<organism>
    <name type="scientific">Bacillus cereus (strain AH187)</name>
    <dbReference type="NCBI Taxonomy" id="405534"/>
    <lineage>
        <taxon>Bacteria</taxon>
        <taxon>Bacillati</taxon>
        <taxon>Bacillota</taxon>
        <taxon>Bacilli</taxon>
        <taxon>Bacillales</taxon>
        <taxon>Bacillaceae</taxon>
        <taxon>Bacillus</taxon>
        <taxon>Bacillus cereus group</taxon>
    </lineage>
</organism>
<accession>B7HVJ1</accession>
<proteinExistence type="inferred from homology"/>
<gene>
    <name evidence="1" type="primary">mqo</name>
    <name type="ordered locus">BCAH187_A3012</name>
</gene>